<organism>
    <name type="scientific">Xenopus laevis</name>
    <name type="common">African clawed frog</name>
    <dbReference type="NCBI Taxonomy" id="8355"/>
    <lineage>
        <taxon>Eukaryota</taxon>
        <taxon>Metazoa</taxon>
        <taxon>Chordata</taxon>
        <taxon>Craniata</taxon>
        <taxon>Vertebrata</taxon>
        <taxon>Euteleostomi</taxon>
        <taxon>Amphibia</taxon>
        <taxon>Batrachia</taxon>
        <taxon>Anura</taxon>
        <taxon>Pipoidea</taxon>
        <taxon>Pipidae</taxon>
        <taxon>Xenopodinae</taxon>
        <taxon>Xenopus</taxon>
        <taxon>Xenopus</taxon>
    </lineage>
</organism>
<accession>Q6NRL0</accession>
<evidence type="ECO:0000305" key="1"/>
<proteinExistence type="evidence at transcript level"/>
<dbReference type="EMBL" id="BC070739">
    <property type="protein sequence ID" value="AAH70739.1"/>
    <property type="molecule type" value="mRNA"/>
</dbReference>
<dbReference type="RefSeq" id="NP_001084854.1">
    <property type="nucleotide sequence ID" value="NM_001091385.1"/>
</dbReference>
<dbReference type="SMR" id="Q6NRL0"/>
<dbReference type="DNASU" id="431901"/>
<dbReference type="GeneID" id="431901"/>
<dbReference type="KEGG" id="xla:431901"/>
<dbReference type="AGR" id="Xenbase:XB-GENE-954559"/>
<dbReference type="CTD" id="431901"/>
<dbReference type="OrthoDB" id="424586at2759"/>
<dbReference type="Proteomes" id="UP000186698">
    <property type="component" value="Chromosome 5L"/>
</dbReference>
<dbReference type="Bgee" id="431901">
    <property type="expression patterns" value="Expressed in internal ear and 19 other cell types or tissues"/>
</dbReference>
<dbReference type="GO" id="GO:0002161">
    <property type="term" value="F:aminoacyl-tRNA deacylase activity"/>
    <property type="evidence" value="ECO:0007669"/>
    <property type="project" value="InterPro"/>
</dbReference>
<dbReference type="CDD" id="cd04335">
    <property type="entry name" value="PrdX_deacylase"/>
    <property type="match status" value="1"/>
</dbReference>
<dbReference type="FunFam" id="3.90.960.10:FF:000005">
    <property type="entry name" value="Putative prolyl-tRNA synthetase"/>
    <property type="match status" value="1"/>
</dbReference>
<dbReference type="Gene3D" id="3.90.960.10">
    <property type="entry name" value="YbaK/aminoacyl-tRNA synthetase-associated domain"/>
    <property type="match status" value="1"/>
</dbReference>
<dbReference type="InterPro" id="IPR040285">
    <property type="entry name" value="ProX/PRXD1"/>
</dbReference>
<dbReference type="InterPro" id="IPR036754">
    <property type="entry name" value="YbaK/aa-tRNA-synt-asso_dom_sf"/>
</dbReference>
<dbReference type="InterPro" id="IPR007214">
    <property type="entry name" value="YbaK/aa-tRNA-synth-assoc-dom"/>
</dbReference>
<dbReference type="PANTHER" id="PTHR31423:SF3">
    <property type="entry name" value="PROLYL-TRNA SYNTHETASE ASSOCIATED DOMAIN-CONTAINING PROTEIN 1-RELATED"/>
    <property type="match status" value="1"/>
</dbReference>
<dbReference type="PANTHER" id="PTHR31423">
    <property type="entry name" value="YBAK DOMAIN-CONTAINING PROTEIN"/>
    <property type="match status" value="1"/>
</dbReference>
<dbReference type="Pfam" id="PF04073">
    <property type="entry name" value="tRNA_edit"/>
    <property type="match status" value="1"/>
</dbReference>
<dbReference type="SUPFAM" id="SSF55826">
    <property type="entry name" value="YbaK/ProRS associated domain"/>
    <property type="match status" value="1"/>
</dbReference>
<reference key="1">
    <citation type="submission" date="2004-05" db="EMBL/GenBank/DDBJ databases">
        <authorList>
            <consortium name="NIH - Xenopus Gene Collection (XGC) project"/>
        </authorList>
    </citation>
    <scope>NUCLEOTIDE SEQUENCE [LARGE SCALE MRNA]</scope>
    <source>
        <tissue>Oocyte</tissue>
    </source>
</reference>
<feature type="chain" id="PRO_0000329289" description="Prolyl-tRNA synthetase associated domain-containing protein 1">
    <location>
        <begin position="1"/>
        <end position="168"/>
    </location>
</feature>
<comment type="similarity">
    <text evidence="1">Belongs to the PRORSD1 family.</text>
</comment>
<name>PRXD1_XENLA</name>
<protein>
    <recommendedName>
        <fullName>Prolyl-tRNA synthetase associated domain-containing protein 1</fullName>
    </recommendedName>
    <alternativeName>
        <fullName>PrdX deacylase domain-containing protein 1</fullName>
    </alternativeName>
    <alternativeName>
        <fullName>Prolyl-tRNA synthetase associated domain-containing protein 1 pseudogene</fullName>
    </alternativeName>
</protein>
<sequence length="168" mass="18928">MAGDLRQELLAYLHELDIRPVCAEHPEVFTVEEMMPHVQHLGGAHSKNLFLKDKKKKGLWLVSVLHDRQVNLNDLAKKLNLGSGNLRFADEASMLEKLKVGQGCATPLALFCDRGDVQFVLDAQFLEGGYERVYFHPMTNAATLGMTPQEFVTFLKKTGHDPIIIHFD</sequence>
<keyword id="KW-1185">Reference proteome</keyword>
<gene>
    <name type="primary">prorsd1p</name>
    <name type="synonym">prdxdd1p</name>
    <name type="ORF">zgc:64201</name>
</gene>